<organism>
    <name type="scientific">Rattus norvegicus</name>
    <name type="common">Rat</name>
    <dbReference type="NCBI Taxonomy" id="10116"/>
    <lineage>
        <taxon>Eukaryota</taxon>
        <taxon>Metazoa</taxon>
        <taxon>Chordata</taxon>
        <taxon>Craniata</taxon>
        <taxon>Vertebrata</taxon>
        <taxon>Euteleostomi</taxon>
        <taxon>Mammalia</taxon>
        <taxon>Eutheria</taxon>
        <taxon>Euarchontoglires</taxon>
        <taxon>Glires</taxon>
        <taxon>Rodentia</taxon>
        <taxon>Myomorpha</taxon>
        <taxon>Muroidea</taxon>
        <taxon>Muridae</taxon>
        <taxon>Murinae</taxon>
        <taxon>Rattus</taxon>
    </lineage>
</organism>
<comment type="function">
    <text evidence="3">Catalyzes the cleavage of N-acetylneuraminic acid (sialic acid) to form pyruvate and N-acetylmannosamine via a Schiff base intermediate. It prevents sialic acids from being recycled and returning to the cell surface. Involved in the N-glycolylneuraminic acid (Neu5Gc) degradation pathway.</text>
</comment>
<comment type="catalytic activity">
    <reaction evidence="3">
        <text>aceneuramate = aldehydo-N-acetyl-D-mannosamine + pyruvate</text>
        <dbReference type="Rhea" id="RHEA:23296"/>
        <dbReference type="ChEBI" id="CHEBI:15361"/>
        <dbReference type="ChEBI" id="CHEBI:17122"/>
        <dbReference type="ChEBI" id="CHEBI:173083"/>
        <dbReference type="EC" id="4.1.3.3"/>
    </reaction>
</comment>
<comment type="pathway">
    <text evidence="3">Amino-sugar metabolism; N-acetylneuraminate degradation.</text>
</comment>
<comment type="subunit">
    <text evidence="3">Homotetramer.</text>
</comment>
<comment type="subcellular location">
    <subcellularLocation>
        <location evidence="1">Cytoplasm</location>
    </subcellularLocation>
</comment>
<comment type="similarity">
    <text evidence="4">Belongs to the DapA family. NanA subfamily.</text>
</comment>
<name>NPL_RAT</name>
<feature type="chain" id="PRO_0000273356" description="N-acetylneuraminate lyase">
    <location>
        <begin position="1"/>
        <end position="320"/>
    </location>
</feature>
<feature type="active site" description="Proton donor" evidence="2">
    <location>
        <position position="143"/>
    </location>
</feature>
<feature type="active site" description="Schiff-base intermediate with substrate" evidence="2">
    <location>
        <position position="173"/>
    </location>
</feature>
<feature type="binding site" evidence="2">
    <location>
        <position position="51"/>
    </location>
    <ligand>
        <name>aceneuramate</name>
        <dbReference type="ChEBI" id="CHEBI:173083"/>
    </ligand>
</feature>
<feature type="binding site" evidence="2">
    <location>
        <position position="52"/>
    </location>
    <ligand>
        <name>aceneuramate</name>
        <dbReference type="ChEBI" id="CHEBI:173083"/>
    </ligand>
</feature>
<feature type="binding site" evidence="2">
    <location>
        <position position="175"/>
    </location>
    <ligand>
        <name>aceneuramate</name>
        <dbReference type="ChEBI" id="CHEBI:173083"/>
    </ligand>
</feature>
<feature type="binding site" evidence="2">
    <location>
        <position position="199"/>
    </location>
    <ligand>
        <name>aceneuramate</name>
        <dbReference type="ChEBI" id="CHEBI:173083"/>
    </ligand>
</feature>
<feature type="binding site" evidence="2">
    <location>
        <position position="201"/>
    </location>
    <ligand>
        <name>aceneuramate</name>
        <dbReference type="ChEBI" id="CHEBI:173083"/>
    </ligand>
</feature>
<feature type="binding site" evidence="2">
    <location>
        <position position="202"/>
    </location>
    <ligand>
        <name>aceneuramate</name>
        <dbReference type="ChEBI" id="CHEBI:173083"/>
    </ligand>
</feature>
<feature type="binding site" evidence="2">
    <location>
        <position position="218"/>
    </location>
    <ligand>
        <name>aceneuramate</name>
        <dbReference type="ChEBI" id="CHEBI:173083"/>
    </ligand>
</feature>
<dbReference type="EC" id="4.1.3.3" evidence="3"/>
<dbReference type="EMBL" id="BC082004">
    <property type="protein sequence ID" value="AAH82004.1"/>
    <property type="molecule type" value="mRNA"/>
</dbReference>
<dbReference type="RefSeq" id="NP_001014006.1">
    <property type="nucleotide sequence ID" value="NM_001013984.1"/>
</dbReference>
<dbReference type="SMR" id="Q66H59"/>
<dbReference type="FunCoup" id="Q66H59">
    <property type="interactions" value="163"/>
</dbReference>
<dbReference type="STRING" id="10116.ENSRNOP00000003713"/>
<dbReference type="iPTMnet" id="Q66H59"/>
<dbReference type="PhosphoSitePlus" id="Q66H59"/>
<dbReference type="PaxDb" id="10116-ENSRNOP00000003713"/>
<dbReference type="Ensembl" id="ENSRNOT00000109291.1">
    <property type="protein sequence ID" value="ENSRNOP00000097337.1"/>
    <property type="gene ID" value="ENSRNOG00000002775.7"/>
</dbReference>
<dbReference type="GeneID" id="304860"/>
<dbReference type="KEGG" id="rno:304860"/>
<dbReference type="UCSC" id="RGD:1549702">
    <property type="organism name" value="rat"/>
</dbReference>
<dbReference type="AGR" id="RGD:1549702"/>
<dbReference type="CTD" id="80896"/>
<dbReference type="RGD" id="1549702">
    <property type="gene designation" value="Npl"/>
</dbReference>
<dbReference type="eggNOG" id="ENOG502QQA3">
    <property type="taxonomic scope" value="Eukaryota"/>
</dbReference>
<dbReference type="GeneTree" id="ENSGT00530000063604"/>
<dbReference type="HOGENOM" id="CLU_049343_6_1_1"/>
<dbReference type="InParanoid" id="Q66H59"/>
<dbReference type="OMA" id="YWNAISA"/>
<dbReference type="OrthoDB" id="191315at2759"/>
<dbReference type="PhylomeDB" id="Q66H59"/>
<dbReference type="TreeFam" id="TF353639"/>
<dbReference type="Reactome" id="R-RNO-4085001">
    <property type="pathway name" value="Sialic acid metabolism"/>
</dbReference>
<dbReference type="UniPathway" id="UPA00629"/>
<dbReference type="PRO" id="PR:Q66H59"/>
<dbReference type="Proteomes" id="UP000002494">
    <property type="component" value="Chromosome 13"/>
</dbReference>
<dbReference type="Bgee" id="ENSRNOG00000002775">
    <property type="expression patterns" value="Expressed in adult mammalian kidney and 18 other cell types or tissues"/>
</dbReference>
<dbReference type="GO" id="GO:0005737">
    <property type="term" value="C:cytoplasm"/>
    <property type="evidence" value="ECO:0007669"/>
    <property type="project" value="UniProtKB-SubCell"/>
</dbReference>
<dbReference type="GO" id="GO:0042802">
    <property type="term" value="F:identical protein binding"/>
    <property type="evidence" value="ECO:0000266"/>
    <property type="project" value="RGD"/>
</dbReference>
<dbReference type="GO" id="GO:0008747">
    <property type="term" value="F:N-acetylneuraminate lyase activity"/>
    <property type="evidence" value="ECO:0000250"/>
    <property type="project" value="UniProtKB"/>
</dbReference>
<dbReference type="GO" id="GO:0019262">
    <property type="term" value="P:N-acetylneuraminate catabolic process"/>
    <property type="evidence" value="ECO:0000250"/>
    <property type="project" value="UniProtKB"/>
</dbReference>
<dbReference type="FunFam" id="3.20.20.70:FF:000133">
    <property type="entry name" value="N-acetylneuraminate pyruvate lyase"/>
    <property type="match status" value="1"/>
</dbReference>
<dbReference type="Gene3D" id="3.20.20.70">
    <property type="entry name" value="Aldolase class I"/>
    <property type="match status" value="1"/>
</dbReference>
<dbReference type="InterPro" id="IPR013785">
    <property type="entry name" value="Aldolase_TIM"/>
</dbReference>
<dbReference type="InterPro" id="IPR002220">
    <property type="entry name" value="DapA-like"/>
</dbReference>
<dbReference type="PANTHER" id="PTHR12128">
    <property type="entry name" value="DIHYDRODIPICOLINATE SYNTHASE"/>
    <property type="match status" value="1"/>
</dbReference>
<dbReference type="PANTHER" id="PTHR12128:SF21">
    <property type="entry name" value="N-ACETYLNEURAMINATE LYASE"/>
    <property type="match status" value="1"/>
</dbReference>
<dbReference type="Pfam" id="PF00701">
    <property type="entry name" value="DHDPS"/>
    <property type="match status" value="1"/>
</dbReference>
<dbReference type="PIRSF" id="PIRSF001365">
    <property type="entry name" value="DHDPS"/>
    <property type="match status" value="1"/>
</dbReference>
<dbReference type="PRINTS" id="PR00146">
    <property type="entry name" value="DHPICSNTHASE"/>
</dbReference>
<dbReference type="SMART" id="SM01130">
    <property type="entry name" value="DHDPS"/>
    <property type="match status" value="1"/>
</dbReference>
<dbReference type="SUPFAM" id="SSF51569">
    <property type="entry name" value="Aldolase"/>
    <property type="match status" value="1"/>
</dbReference>
<keyword id="KW-0119">Carbohydrate metabolism</keyword>
<keyword id="KW-0963">Cytoplasm</keyword>
<keyword id="KW-0456">Lyase</keyword>
<keyword id="KW-1185">Reference proteome</keyword>
<keyword id="KW-0704">Schiff base</keyword>
<proteinExistence type="evidence at transcript level"/>
<reference key="1">
    <citation type="journal article" date="2004" name="Genome Res.">
        <title>The status, quality, and expansion of the NIH full-length cDNA project: the Mammalian Gene Collection (MGC).</title>
        <authorList>
            <consortium name="The MGC Project Team"/>
        </authorList>
    </citation>
    <scope>NUCLEOTIDE SEQUENCE [LARGE SCALE MRNA]</scope>
    <source>
        <tissue>Testis</tissue>
    </source>
</reference>
<protein>
    <recommendedName>
        <fullName evidence="4">N-acetylneuraminate lyase</fullName>
        <shortName>NALase</shortName>
        <ecNumber evidence="3">4.1.3.3</ecNumber>
    </recommendedName>
    <alternativeName>
        <fullName>N-acetylneuraminate pyruvate-lyase</fullName>
    </alternativeName>
    <alternativeName>
        <fullName>N-acetylneuraminic acid aldolase</fullName>
    </alternativeName>
    <alternativeName>
        <fullName>Sialate lyase</fullName>
    </alternativeName>
    <alternativeName>
        <fullName>Sialate-pyruvate lyase</fullName>
    </alternativeName>
    <alternativeName>
        <fullName>Sialic acid aldolase</fullName>
    </alternativeName>
    <alternativeName>
        <fullName>Sialic acid lyase</fullName>
    </alternativeName>
</protein>
<evidence type="ECO:0000250" key="1"/>
<evidence type="ECO:0000250" key="2">
    <source>
        <dbReference type="UniProtKB" id="P0A6L4"/>
    </source>
</evidence>
<evidence type="ECO:0000250" key="3">
    <source>
        <dbReference type="UniProtKB" id="Q9BXD5"/>
    </source>
</evidence>
<evidence type="ECO:0000305" key="4"/>
<evidence type="ECO:0000312" key="5">
    <source>
        <dbReference type="RGD" id="1549702"/>
    </source>
</evidence>
<gene>
    <name evidence="5" type="primary">Npl</name>
</gene>
<accession>Q66H59</accession>
<sequence length="320" mass="35115">MAFPKKKLQGLVAATITPMTENGEINFPVIGQYVDYLVKEQGVKNIFVNGTTGEGLSLSISERRQVAEEWVRQGKNKLDQVVIHVGALNLKESQELAQHAAEIGADGIAVIAPFFFKSQNKDALISFLREVAAAAPALPFYYYHIPSLTGVKIRAEELLDGIQDKIPSFQGLKFSDTDLLDFGQCVDQNHQRQFALLFGVDEQLLSALVLGATGAVGSTYNYLGKKTNQMLEAFEQKDLASALSYQFRIQRFINYVIKLGFGVSQTKAIMTLVSGIPMGPPRLPLQKATQEFTANAEAKLKSLNFLSFPGLKDGNMEACS</sequence>